<name>RL20_SALDC</name>
<accession>B5FJA5</accession>
<feature type="chain" id="PRO_1000122364" description="Large ribosomal subunit protein bL20">
    <location>
        <begin position="1"/>
        <end position="118"/>
    </location>
</feature>
<comment type="function">
    <text evidence="1">Binds directly to 23S ribosomal RNA and is necessary for the in vitro assembly process of the 50S ribosomal subunit. It is not involved in the protein synthesizing functions of that subunit.</text>
</comment>
<comment type="similarity">
    <text evidence="1">Belongs to the bacterial ribosomal protein bL20 family.</text>
</comment>
<gene>
    <name evidence="1" type="primary">rplT</name>
    <name type="ordered locus">SeD_A2009</name>
</gene>
<dbReference type="EMBL" id="CP001144">
    <property type="protein sequence ID" value="ACH74389.1"/>
    <property type="molecule type" value="Genomic_DNA"/>
</dbReference>
<dbReference type="RefSeq" id="WP_000124850.1">
    <property type="nucleotide sequence ID" value="NC_011205.1"/>
</dbReference>
<dbReference type="SMR" id="B5FJA5"/>
<dbReference type="GeneID" id="98388757"/>
<dbReference type="KEGG" id="sed:SeD_A2009"/>
<dbReference type="HOGENOM" id="CLU_123265_0_1_6"/>
<dbReference type="Proteomes" id="UP000008322">
    <property type="component" value="Chromosome"/>
</dbReference>
<dbReference type="GO" id="GO:1990904">
    <property type="term" value="C:ribonucleoprotein complex"/>
    <property type="evidence" value="ECO:0007669"/>
    <property type="project" value="UniProtKB-KW"/>
</dbReference>
<dbReference type="GO" id="GO:0005840">
    <property type="term" value="C:ribosome"/>
    <property type="evidence" value="ECO:0007669"/>
    <property type="project" value="UniProtKB-KW"/>
</dbReference>
<dbReference type="GO" id="GO:0019843">
    <property type="term" value="F:rRNA binding"/>
    <property type="evidence" value="ECO:0007669"/>
    <property type="project" value="UniProtKB-UniRule"/>
</dbReference>
<dbReference type="GO" id="GO:0003735">
    <property type="term" value="F:structural constituent of ribosome"/>
    <property type="evidence" value="ECO:0007669"/>
    <property type="project" value="InterPro"/>
</dbReference>
<dbReference type="GO" id="GO:0000027">
    <property type="term" value="P:ribosomal large subunit assembly"/>
    <property type="evidence" value="ECO:0007669"/>
    <property type="project" value="UniProtKB-UniRule"/>
</dbReference>
<dbReference type="GO" id="GO:0006412">
    <property type="term" value="P:translation"/>
    <property type="evidence" value="ECO:0007669"/>
    <property type="project" value="InterPro"/>
</dbReference>
<dbReference type="CDD" id="cd07026">
    <property type="entry name" value="Ribosomal_L20"/>
    <property type="match status" value="1"/>
</dbReference>
<dbReference type="FunFam" id="1.10.1900.20:FF:000001">
    <property type="entry name" value="50S ribosomal protein L20"/>
    <property type="match status" value="1"/>
</dbReference>
<dbReference type="Gene3D" id="6.10.160.10">
    <property type="match status" value="1"/>
</dbReference>
<dbReference type="Gene3D" id="1.10.1900.20">
    <property type="entry name" value="Ribosomal protein L20"/>
    <property type="match status" value="1"/>
</dbReference>
<dbReference type="HAMAP" id="MF_00382">
    <property type="entry name" value="Ribosomal_bL20"/>
    <property type="match status" value="1"/>
</dbReference>
<dbReference type="InterPro" id="IPR005813">
    <property type="entry name" value="Ribosomal_bL20"/>
</dbReference>
<dbReference type="InterPro" id="IPR049946">
    <property type="entry name" value="RIBOSOMAL_L20_CS"/>
</dbReference>
<dbReference type="InterPro" id="IPR035566">
    <property type="entry name" value="Ribosomal_protein_bL20_C"/>
</dbReference>
<dbReference type="NCBIfam" id="TIGR01032">
    <property type="entry name" value="rplT_bact"/>
    <property type="match status" value="1"/>
</dbReference>
<dbReference type="PANTHER" id="PTHR10986">
    <property type="entry name" value="39S RIBOSOMAL PROTEIN L20"/>
    <property type="match status" value="1"/>
</dbReference>
<dbReference type="Pfam" id="PF00453">
    <property type="entry name" value="Ribosomal_L20"/>
    <property type="match status" value="1"/>
</dbReference>
<dbReference type="PRINTS" id="PR00062">
    <property type="entry name" value="RIBOSOMALL20"/>
</dbReference>
<dbReference type="SUPFAM" id="SSF74731">
    <property type="entry name" value="Ribosomal protein L20"/>
    <property type="match status" value="1"/>
</dbReference>
<dbReference type="PROSITE" id="PS00937">
    <property type="entry name" value="RIBOSOMAL_L20"/>
    <property type="match status" value="1"/>
</dbReference>
<keyword id="KW-0687">Ribonucleoprotein</keyword>
<keyword id="KW-0689">Ribosomal protein</keyword>
<keyword id="KW-0694">RNA-binding</keyword>
<keyword id="KW-0699">rRNA-binding</keyword>
<proteinExistence type="inferred from homology"/>
<reference key="1">
    <citation type="journal article" date="2011" name="J. Bacteriol.">
        <title>Comparative genomics of 28 Salmonella enterica isolates: evidence for CRISPR-mediated adaptive sublineage evolution.</title>
        <authorList>
            <person name="Fricke W.F."/>
            <person name="Mammel M.K."/>
            <person name="McDermott P.F."/>
            <person name="Tartera C."/>
            <person name="White D.G."/>
            <person name="Leclerc J.E."/>
            <person name="Ravel J."/>
            <person name="Cebula T.A."/>
        </authorList>
    </citation>
    <scope>NUCLEOTIDE SEQUENCE [LARGE SCALE GENOMIC DNA]</scope>
    <source>
        <strain>CT_02021853</strain>
    </source>
</reference>
<protein>
    <recommendedName>
        <fullName evidence="1">Large ribosomal subunit protein bL20</fullName>
    </recommendedName>
    <alternativeName>
        <fullName evidence="2">50S ribosomal protein L20</fullName>
    </alternativeName>
</protein>
<sequence>MARVKRGVIARARHKKILKQAKGYYGARSRVYRVAFQAVIKAGQYAYRDRRQRKRQFRQLWIARINAAARQNGISYSKFINGLKKASVEIDRKILADIAVFDKVAFTALVEKAKAALA</sequence>
<evidence type="ECO:0000255" key="1">
    <source>
        <dbReference type="HAMAP-Rule" id="MF_00382"/>
    </source>
</evidence>
<evidence type="ECO:0000305" key="2"/>
<organism>
    <name type="scientific">Salmonella dublin (strain CT_02021853)</name>
    <dbReference type="NCBI Taxonomy" id="439851"/>
    <lineage>
        <taxon>Bacteria</taxon>
        <taxon>Pseudomonadati</taxon>
        <taxon>Pseudomonadota</taxon>
        <taxon>Gammaproteobacteria</taxon>
        <taxon>Enterobacterales</taxon>
        <taxon>Enterobacteriaceae</taxon>
        <taxon>Salmonella</taxon>
    </lineage>
</organism>